<name>CH602_RENSM</name>
<dbReference type="EC" id="5.6.1.7" evidence="1"/>
<dbReference type="EMBL" id="CP000910">
    <property type="protein sequence ID" value="ABY23503.1"/>
    <property type="molecule type" value="Genomic_DNA"/>
</dbReference>
<dbReference type="RefSeq" id="WP_012245175.1">
    <property type="nucleotide sequence ID" value="NC_010168.1"/>
</dbReference>
<dbReference type="SMR" id="A9WN14"/>
<dbReference type="STRING" id="288705.RSal33209_1768"/>
<dbReference type="KEGG" id="rsa:RSal33209_1768"/>
<dbReference type="eggNOG" id="COG0459">
    <property type="taxonomic scope" value="Bacteria"/>
</dbReference>
<dbReference type="HOGENOM" id="CLU_016503_3_0_11"/>
<dbReference type="Proteomes" id="UP000002007">
    <property type="component" value="Chromosome"/>
</dbReference>
<dbReference type="GO" id="GO:0005737">
    <property type="term" value="C:cytoplasm"/>
    <property type="evidence" value="ECO:0007669"/>
    <property type="project" value="UniProtKB-SubCell"/>
</dbReference>
<dbReference type="GO" id="GO:0005524">
    <property type="term" value="F:ATP binding"/>
    <property type="evidence" value="ECO:0007669"/>
    <property type="project" value="UniProtKB-UniRule"/>
</dbReference>
<dbReference type="GO" id="GO:0140662">
    <property type="term" value="F:ATP-dependent protein folding chaperone"/>
    <property type="evidence" value="ECO:0007669"/>
    <property type="project" value="InterPro"/>
</dbReference>
<dbReference type="GO" id="GO:0016853">
    <property type="term" value="F:isomerase activity"/>
    <property type="evidence" value="ECO:0007669"/>
    <property type="project" value="UniProtKB-KW"/>
</dbReference>
<dbReference type="GO" id="GO:0051082">
    <property type="term" value="F:unfolded protein binding"/>
    <property type="evidence" value="ECO:0007669"/>
    <property type="project" value="UniProtKB-UniRule"/>
</dbReference>
<dbReference type="GO" id="GO:0042026">
    <property type="term" value="P:protein refolding"/>
    <property type="evidence" value="ECO:0007669"/>
    <property type="project" value="UniProtKB-UniRule"/>
</dbReference>
<dbReference type="CDD" id="cd03344">
    <property type="entry name" value="GroEL"/>
    <property type="match status" value="1"/>
</dbReference>
<dbReference type="FunFam" id="3.50.7.10:FF:000001">
    <property type="entry name" value="60 kDa chaperonin"/>
    <property type="match status" value="1"/>
</dbReference>
<dbReference type="Gene3D" id="3.50.7.10">
    <property type="entry name" value="GroEL"/>
    <property type="match status" value="1"/>
</dbReference>
<dbReference type="Gene3D" id="1.10.560.10">
    <property type="entry name" value="GroEL-like equatorial domain"/>
    <property type="match status" value="1"/>
</dbReference>
<dbReference type="Gene3D" id="3.30.260.10">
    <property type="entry name" value="TCP-1-like chaperonin intermediate domain"/>
    <property type="match status" value="1"/>
</dbReference>
<dbReference type="HAMAP" id="MF_00600">
    <property type="entry name" value="CH60"/>
    <property type="match status" value="1"/>
</dbReference>
<dbReference type="InterPro" id="IPR001844">
    <property type="entry name" value="Cpn60/GroEL"/>
</dbReference>
<dbReference type="InterPro" id="IPR002423">
    <property type="entry name" value="Cpn60/GroEL/TCP-1"/>
</dbReference>
<dbReference type="InterPro" id="IPR027409">
    <property type="entry name" value="GroEL-like_apical_dom_sf"/>
</dbReference>
<dbReference type="InterPro" id="IPR027413">
    <property type="entry name" value="GROEL-like_equatorial_sf"/>
</dbReference>
<dbReference type="InterPro" id="IPR027410">
    <property type="entry name" value="TCP-1-like_intermed_sf"/>
</dbReference>
<dbReference type="NCBIfam" id="TIGR02348">
    <property type="entry name" value="GroEL"/>
    <property type="match status" value="1"/>
</dbReference>
<dbReference type="NCBIfam" id="NF000592">
    <property type="entry name" value="PRK00013.1"/>
    <property type="match status" value="1"/>
</dbReference>
<dbReference type="NCBIfam" id="NF009487">
    <property type="entry name" value="PRK12849.1"/>
    <property type="match status" value="1"/>
</dbReference>
<dbReference type="NCBIfam" id="NF009488">
    <property type="entry name" value="PRK12850.1"/>
    <property type="match status" value="1"/>
</dbReference>
<dbReference type="NCBIfam" id="NF009489">
    <property type="entry name" value="PRK12851.1"/>
    <property type="match status" value="1"/>
</dbReference>
<dbReference type="PANTHER" id="PTHR45633">
    <property type="entry name" value="60 KDA HEAT SHOCK PROTEIN, MITOCHONDRIAL"/>
    <property type="match status" value="1"/>
</dbReference>
<dbReference type="Pfam" id="PF00118">
    <property type="entry name" value="Cpn60_TCP1"/>
    <property type="match status" value="1"/>
</dbReference>
<dbReference type="PRINTS" id="PR00298">
    <property type="entry name" value="CHAPERONIN60"/>
</dbReference>
<dbReference type="SUPFAM" id="SSF52029">
    <property type="entry name" value="GroEL apical domain-like"/>
    <property type="match status" value="1"/>
</dbReference>
<dbReference type="SUPFAM" id="SSF48592">
    <property type="entry name" value="GroEL equatorial domain-like"/>
    <property type="match status" value="1"/>
</dbReference>
<dbReference type="SUPFAM" id="SSF54849">
    <property type="entry name" value="GroEL-intermediate domain like"/>
    <property type="match status" value="1"/>
</dbReference>
<evidence type="ECO:0000255" key="1">
    <source>
        <dbReference type="HAMAP-Rule" id="MF_00600"/>
    </source>
</evidence>
<proteinExistence type="inferred from homology"/>
<comment type="function">
    <text evidence="1">Together with its co-chaperonin GroES, plays an essential role in assisting protein folding. The GroEL-GroES system forms a nano-cage that allows encapsulation of the non-native substrate proteins and provides a physical environment optimized to promote and accelerate protein folding.</text>
</comment>
<comment type="catalytic activity">
    <reaction evidence="1">
        <text>ATP + H2O + a folded polypeptide = ADP + phosphate + an unfolded polypeptide.</text>
        <dbReference type="EC" id="5.6.1.7"/>
    </reaction>
</comment>
<comment type="subunit">
    <text evidence="1">Forms a cylinder of 14 subunits composed of two heptameric rings stacked back-to-back. Interacts with the co-chaperonin GroES.</text>
</comment>
<comment type="subcellular location">
    <subcellularLocation>
        <location evidence="1">Cytoplasm</location>
    </subcellularLocation>
</comment>
<comment type="similarity">
    <text evidence="1">Belongs to the chaperonin (HSP60) family.</text>
</comment>
<organism>
    <name type="scientific">Renibacterium salmoninarum (strain ATCC 33209 / DSM 20767 / JCM 11484 / NBRC 15589 / NCIMB 2235)</name>
    <dbReference type="NCBI Taxonomy" id="288705"/>
    <lineage>
        <taxon>Bacteria</taxon>
        <taxon>Bacillati</taxon>
        <taxon>Actinomycetota</taxon>
        <taxon>Actinomycetes</taxon>
        <taxon>Micrococcales</taxon>
        <taxon>Micrococcaceae</taxon>
        <taxon>Renibacterium</taxon>
    </lineage>
</organism>
<gene>
    <name evidence="1" type="primary">groEL2</name>
    <name evidence="1" type="synonym">groL2</name>
    <name type="ordered locus">RSal33209_1768</name>
</gene>
<protein>
    <recommendedName>
        <fullName evidence="1">Chaperonin GroEL 2</fullName>
        <ecNumber evidence="1">5.6.1.7</ecNumber>
    </recommendedName>
    <alternativeName>
        <fullName evidence="1">60 kDa chaperonin 2</fullName>
    </alternativeName>
    <alternativeName>
        <fullName evidence="1">Chaperonin-60 2</fullName>
        <shortName evidence="1">Cpn60 2</shortName>
    </alternativeName>
</protein>
<keyword id="KW-0067">ATP-binding</keyword>
<keyword id="KW-0143">Chaperone</keyword>
<keyword id="KW-0963">Cytoplasm</keyword>
<keyword id="KW-0413">Isomerase</keyword>
<keyword id="KW-0547">Nucleotide-binding</keyword>
<keyword id="KW-1185">Reference proteome</keyword>
<sequence>MAKQIEFNDAARKSLEAGVDRLANAVKVTLGPRGRNVVLDKKWGAPTITNDGVTIAREIELDDPYENLGAQLAKEVATKTNDVAGDGTTTATVLAQALVKEGLRNVAAGAAPSALKHGIEVSVEAIAGRLLENTREVAGGQVASVAAISAQSPEIGELLAEAFDKVGKDGVITIEESSSMVTELVLTEGMQFDKGYLSPHFVTDHERQEAVLEDALILINQGKISSIQEFLPLLEKTLKASKPLFIIAEDVDGEALSTLIVNRLRGNLNVVAVKAPGFGDRRKAMLQDIAILTGAQVVSPEIGLSLDQVGLEVLGTARRITVTKDNTTIVDGAGTDADVADRVSQLRAELERTDSDWDKEKLQERLAKLAGGIGVIKVGAATEVELKEKKHRIEDAVSSTRAALEEGIVAGGGSALVQAAKALDENAEVKALEGDAVTAVNLVRRAVAQPLRWIAENAGHDGYLVISKVAELPDGHGFNAATGEYGDLIAQGVIDPVKVTRSALRNAASIAALVLTTEALVVEKPEEDESDSHAGHQH</sequence>
<reference key="1">
    <citation type="journal article" date="2008" name="J. Bacteriol.">
        <title>Genome sequence of the fish pathogen Renibacterium salmoninarum suggests reductive evolution away from an environmental Arthrobacter ancestor.</title>
        <authorList>
            <person name="Wiens G.D."/>
            <person name="Rockey D.D."/>
            <person name="Wu Z."/>
            <person name="Chang J."/>
            <person name="Levy R."/>
            <person name="Crane S."/>
            <person name="Chen D.S."/>
            <person name="Capri G.R."/>
            <person name="Burnett J.R."/>
            <person name="Sudheesh P.S."/>
            <person name="Schipma M.J."/>
            <person name="Burd H."/>
            <person name="Bhattacharyya A."/>
            <person name="Rhodes L.D."/>
            <person name="Kaul R."/>
            <person name="Strom M.S."/>
        </authorList>
    </citation>
    <scope>NUCLEOTIDE SEQUENCE [LARGE SCALE GENOMIC DNA]</scope>
    <source>
        <strain>ATCC 33209 / DSM 20767 / JCM 11484 / NBRC 15589 / NCIMB 2235</strain>
    </source>
</reference>
<accession>A9WN14</accession>
<feature type="chain" id="PRO_0000332055" description="Chaperonin GroEL 2">
    <location>
        <begin position="1"/>
        <end position="538"/>
    </location>
</feature>
<feature type="binding site" evidence="1">
    <location>
        <begin position="29"/>
        <end position="32"/>
    </location>
    <ligand>
        <name>ATP</name>
        <dbReference type="ChEBI" id="CHEBI:30616"/>
    </ligand>
</feature>
<feature type="binding site" evidence="1">
    <location>
        <begin position="86"/>
        <end position="90"/>
    </location>
    <ligand>
        <name>ATP</name>
        <dbReference type="ChEBI" id="CHEBI:30616"/>
    </ligand>
</feature>
<feature type="binding site" evidence="1">
    <location>
        <position position="412"/>
    </location>
    <ligand>
        <name>ATP</name>
        <dbReference type="ChEBI" id="CHEBI:30616"/>
    </ligand>
</feature>
<feature type="binding site" evidence="1">
    <location>
        <begin position="479"/>
        <end position="481"/>
    </location>
    <ligand>
        <name>ATP</name>
        <dbReference type="ChEBI" id="CHEBI:30616"/>
    </ligand>
</feature>
<feature type="binding site" evidence="1">
    <location>
        <position position="495"/>
    </location>
    <ligand>
        <name>ATP</name>
        <dbReference type="ChEBI" id="CHEBI:30616"/>
    </ligand>
</feature>